<name>ASTER_MOUSE</name>
<feature type="initiator methionine" description="Removed" evidence="2">
    <location>
        <position position="1"/>
    </location>
</feature>
<feature type="chain" id="PRO_0000071606" description="PAT complex subunit Asterix">
    <location>
        <begin position="2"/>
        <end position="106"/>
    </location>
</feature>
<feature type="topological domain" description="Cytoplasmic" evidence="1">
    <location>
        <begin position="2"/>
        <end position="32"/>
    </location>
</feature>
<feature type="transmembrane region" description="Helical" evidence="1">
    <location>
        <begin position="33"/>
        <end position="51"/>
    </location>
</feature>
<feature type="topological domain" description="Lumenal" evidence="1">
    <location>
        <position position="52"/>
    </location>
</feature>
<feature type="transmembrane region" description="Helical" evidence="1">
    <location>
        <begin position="53"/>
        <end position="70"/>
    </location>
</feature>
<feature type="topological domain" description="Cytoplasmic" evidence="1">
    <location>
        <begin position="71"/>
        <end position="74"/>
    </location>
</feature>
<feature type="transmembrane region" description="Helical" evidence="1">
    <location>
        <begin position="75"/>
        <end position="95"/>
    </location>
</feature>
<feature type="topological domain" description="Lumenal" evidence="1">
    <location>
        <begin position="96"/>
        <end position="106"/>
    </location>
</feature>
<feature type="region of interest" description="Disordered" evidence="3">
    <location>
        <begin position="1"/>
        <end position="29"/>
    </location>
</feature>
<feature type="modified residue" description="N-acetylserine" evidence="2">
    <location>
        <position position="2"/>
    </location>
</feature>
<accession>Q6ZWX0</accession>
<dbReference type="EMBL" id="AK010893">
    <property type="protein sequence ID" value="BAB27250.1"/>
    <property type="molecule type" value="mRNA"/>
</dbReference>
<dbReference type="EMBL" id="BC056474">
    <property type="protein sequence ID" value="AAH56474.1"/>
    <property type="molecule type" value="mRNA"/>
</dbReference>
<dbReference type="EMBL" id="BC089623">
    <property type="protein sequence ID" value="AAH89623.1"/>
    <property type="molecule type" value="mRNA"/>
</dbReference>
<dbReference type="CCDS" id="CCDS80909.1"/>
<dbReference type="RefSeq" id="NP_001001493.1">
    <property type="nucleotide sequence ID" value="NM_001001493.2"/>
</dbReference>
<dbReference type="SMR" id="Q6ZWX0"/>
<dbReference type="FunCoup" id="Q6ZWX0">
    <property type="interactions" value="797"/>
</dbReference>
<dbReference type="STRING" id="10090.ENSMUSP00000078697"/>
<dbReference type="GlyGen" id="Q6ZWX0">
    <property type="glycosylation" value="1 site"/>
</dbReference>
<dbReference type="PhosphoSitePlus" id="Q6ZWX0"/>
<dbReference type="PaxDb" id="10090-ENSMUSP00000078697"/>
<dbReference type="ProteomicsDB" id="277081"/>
<dbReference type="Antibodypedia" id="26085">
    <property type="antibodies" value="25 antibodies from 13 providers"/>
</dbReference>
<dbReference type="DNASU" id="414077"/>
<dbReference type="Ensembl" id="ENSMUST00000079764.14">
    <property type="protein sequence ID" value="ENSMUSP00000078697.9"/>
    <property type="gene ID" value="ENSMUSG00000059355.14"/>
</dbReference>
<dbReference type="GeneID" id="414077"/>
<dbReference type="KEGG" id="mmu:414077"/>
<dbReference type="UCSC" id="uc009mpj.1">
    <property type="organism name" value="mouse"/>
</dbReference>
<dbReference type="AGR" id="MGI:3041257"/>
<dbReference type="CTD" id="51398"/>
<dbReference type="MGI" id="MGI:3041257">
    <property type="gene designation" value="Wdr83os"/>
</dbReference>
<dbReference type="VEuPathDB" id="HostDB:ENSMUSG00000059355"/>
<dbReference type="eggNOG" id="KOG3462">
    <property type="taxonomic scope" value="Eukaryota"/>
</dbReference>
<dbReference type="GeneTree" id="ENSGT00390000002121"/>
<dbReference type="HOGENOM" id="CLU_128526_1_1_1"/>
<dbReference type="InParanoid" id="Q6ZWX0"/>
<dbReference type="OMA" id="MFGLMMK"/>
<dbReference type="OrthoDB" id="284718at2759"/>
<dbReference type="BioGRID-ORCS" id="414077">
    <property type="hits" value="6 hits in 54 CRISPR screens"/>
</dbReference>
<dbReference type="ChiTaRS" id="Wdr83os">
    <property type="organism name" value="mouse"/>
</dbReference>
<dbReference type="PRO" id="PR:Q6ZWX0"/>
<dbReference type="Proteomes" id="UP000000589">
    <property type="component" value="Chromosome 8"/>
</dbReference>
<dbReference type="RNAct" id="Q6ZWX0">
    <property type="molecule type" value="protein"/>
</dbReference>
<dbReference type="Bgee" id="ENSMUSG00000059355">
    <property type="expression patterns" value="Expressed in urinary bladder and 68 other cell types or tissues"/>
</dbReference>
<dbReference type="ExpressionAtlas" id="Q6ZWX0">
    <property type="expression patterns" value="baseline and differential"/>
</dbReference>
<dbReference type="GO" id="GO:0005789">
    <property type="term" value="C:endoplasmic reticulum membrane"/>
    <property type="evidence" value="ECO:0000250"/>
    <property type="project" value="UniProtKB"/>
</dbReference>
<dbReference type="GO" id="GO:0160064">
    <property type="term" value="C:multi-pass translocon complex"/>
    <property type="evidence" value="ECO:0000250"/>
    <property type="project" value="UniProtKB"/>
</dbReference>
<dbReference type="GO" id="GO:0101031">
    <property type="term" value="C:protein folding chaperone complex"/>
    <property type="evidence" value="ECO:0007669"/>
    <property type="project" value="Ensembl"/>
</dbReference>
<dbReference type="GO" id="GO:0044183">
    <property type="term" value="F:protein folding chaperone"/>
    <property type="evidence" value="ECO:0000250"/>
    <property type="project" value="UniProtKB"/>
</dbReference>
<dbReference type="GO" id="GO:0160063">
    <property type="term" value="P:multi-pass transmembrane protein insertion into ER membrane"/>
    <property type="evidence" value="ECO:0000250"/>
    <property type="project" value="UniProtKB"/>
</dbReference>
<dbReference type="GO" id="GO:0045048">
    <property type="term" value="P:protein insertion into ER membrane"/>
    <property type="evidence" value="ECO:0000250"/>
    <property type="project" value="UniProtKB"/>
</dbReference>
<dbReference type="InterPro" id="IPR005351">
    <property type="entry name" value="ASTER"/>
</dbReference>
<dbReference type="PANTHER" id="PTHR13193">
    <property type="entry name" value="CGI-140"/>
    <property type="match status" value="1"/>
</dbReference>
<dbReference type="PANTHER" id="PTHR13193:SF0">
    <property type="entry name" value="PAT COMPLEX SUBUNIT ASTERIX"/>
    <property type="match status" value="1"/>
</dbReference>
<dbReference type="Pfam" id="PF03669">
    <property type="entry name" value="ASTER"/>
    <property type="match status" value="1"/>
</dbReference>
<organism>
    <name type="scientific">Mus musculus</name>
    <name type="common">Mouse</name>
    <dbReference type="NCBI Taxonomy" id="10090"/>
    <lineage>
        <taxon>Eukaryota</taxon>
        <taxon>Metazoa</taxon>
        <taxon>Chordata</taxon>
        <taxon>Craniata</taxon>
        <taxon>Vertebrata</taxon>
        <taxon>Euteleostomi</taxon>
        <taxon>Mammalia</taxon>
        <taxon>Eutheria</taxon>
        <taxon>Euarchontoglires</taxon>
        <taxon>Glires</taxon>
        <taxon>Rodentia</taxon>
        <taxon>Myomorpha</taxon>
        <taxon>Muroidea</taxon>
        <taxon>Muridae</taxon>
        <taxon>Murinae</taxon>
        <taxon>Mus</taxon>
        <taxon>Mus</taxon>
    </lineage>
</organism>
<proteinExistence type="evidence at transcript level"/>
<comment type="function">
    <text evidence="1 2">Component of the multi-pass translocon (MPT) complex that mediates insertion of multi-pass membrane proteins into the lipid bilayer of membranes. The MPT complex takes over after the SEC61 complex: following membrane insertion of the first few transmembrane segments of proteins by the SEC61 complex, the MPT complex occludes the lateral gate of the SEC61 complex to promote insertion of subsequent transmembrane regions (By similarity). Within the MPT complex, the PAT subcomplex sequesters any highly polar regions in the transmembrane domains away from the non-polar membrane environment until they can be buried in the interior of the fully assembled protein. Within the PAT subcomplex, WDR83OS/Asterix binds to and redirects the substrate to a location behind the SEC61 complex (By similarity).</text>
</comment>
<comment type="subunit">
    <text evidence="2">Component of the PAT complex, composed of WDR83OS/Asterix and CCDC47. The PAT complex is part of the multi-pass translocon (MPT) complex, composed of three subcomplexes, the GEL complex (composed of RAB5IF/OPTI and TMCO1), the BOS complex (composed of NCLN/Nicalin, NOMO1 and TMEM147) and the PAT complex (composed of WDR83OS/Asterix and CCDC47). The MPT complex associates with the SEC61 complex.</text>
</comment>
<comment type="subcellular location">
    <subcellularLocation>
        <location evidence="2">Endoplasmic reticulum membrane</location>
        <topology evidence="2">Multi-pass membrane protein</topology>
    </subcellularLocation>
</comment>
<comment type="tissue specificity">
    <text evidence="4">Expressed in the liver.</text>
</comment>
<comment type="similarity">
    <text evidence="5">Belongs to the Asterix family.</text>
</comment>
<gene>
    <name evidence="6" type="primary">Wdr83os</name>
</gene>
<protein>
    <recommendedName>
        <fullName evidence="2">PAT complex subunit Asterix</fullName>
    </recommendedName>
    <alternativeName>
        <fullName>Protein WDR83OS homolog</fullName>
    </alternativeName>
    <alternativeName>
        <fullName evidence="2">Protein associated with the ER translocon of 10kDa</fullName>
        <shortName evidence="2">PAT-10</shortName>
        <shortName evidence="2">PAT10</shortName>
    </alternativeName>
</protein>
<sequence>MSTNNMSDPRRPNKVLRYKPPPSECNPALDDPTPDYMNLLGMIFSMCGLMLKLKWCAWVAVYCSFISFANSRSSEDTKQMMSSFMLSISAVVMSYLQNPQPMTPPW</sequence>
<keyword id="KW-0007">Acetylation</keyword>
<keyword id="KW-0143">Chaperone</keyword>
<keyword id="KW-0256">Endoplasmic reticulum</keyword>
<keyword id="KW-0472">Membrane</keyword>
<keyword id="KW-1185">Reference proteome</keyword>
<keyword id="KW-0812">Transmembrane</keyword>
<keyword id="KW-1133">Transmembrane helix</keyword>
<reference key="1">
    <citation type="journal article" date="2005" name="Science">
        <title>The transcriptional landscape of the mammalian genome.</title>
        <authorList>
            <person name="Carninci P."/>
            <person name="Kasukawa T."/>
            <person name="Katayama S."/>
            <person name="Gough J."/>
            <person name="Frith M.C."/>
            <person name="Maeda N."/>
            <person name="Oyama R."/>
            <person name="Ravasi T."/>
            <person name="Lenhard B."/>
            <person name="Wells C."/>
            <person name="Kodzius R."/>
            <person name="Shimokawa K."/>
            <person name="Bajic V.B."/>
            <person name="Brenner S.E."/>
            <person name="Batalov S."/>
            <person name="Forrest A.R."/>
            <person name="Zavolan M."/>
            <person name="Davis M.J."/>
            <person name="Wilming L.G."/>
            <person name="Aidinis V."/>
            <person name="Allen J.E."/>
            <person name="Ambesi-Impiombato A."/>
            <person name="Apweiler R."/>
            <person name="Aturaliya R.N."/>
            <person name="Bailey T.L."/>
            <person name="Bansal M."/>
            <person name="Baxter L."/>
            <person name="Beisel K.W."/>
            <person name="Bersano T."/>
            <person name="Bono H."/>
            <person name="Chalk A.M."/>
            <person name="Chiu K.P."/>
            <person name="Choudhary V."/>
            <person name="Christoffels A."/>
            <person name="Clutterbuck D.R."/>
            <person name="Crowe M.L."/>
            <person name="Dalla E."/>
            <person name="Dalrymple B.P."/>
            <person name="de Bono B."/>
            <person name="Della Gatta G."/>
            <person name="di Bernardo D."/>
            <person name="Down T."/>
            <person name="Engstrom P."/>
            <person name="Fagiolini M."/>
            <person name="Faulkner G."/>
            <person name="Fletcher C.F."/>
            <person name="Fukushima T."/>
            <person name="Furuno M."/>
            <person name="Futaki S."/>
            <person name="Gariboldi M."/>
            <person name="Georgii-Hemming P."/>
            <person name="Gingeras T.R."/>
            <person name="Gojobori T."/>
            <person name="Green R.E."/>
            <person name="Gustincich S."/>
            <person name="Harbers M."/>
            <person name="Hayashi Y."/>
            <person name="Hensch T.K."/>
            <person name="Hirokawa N."/>
            <person name="Hill D."/>
            <person name="Huminiecki L."/>
            <person name="Iacono M."/>
            <person name="Ikeo K."/>
            <person name="Iwama A."/>
            <person name="Ishikawa T."/>
            <person name="Jakt M."/>
            <person name="Kanapin A."/>
            <person name="Katoh M."/>
            <person name="Kawasawa Y."/>
            <person name="Kelso J."/>
            <person name="Kitamura H."/>
            <person name="Kitano H."/>
            <person name="Kollias G."/>
            <person name="Krishnan S.P."/>
            <person name="Kruger A."/>
            <person name="Kummerfeld S.K."/>
            <person name="Kurochkin I.V."/>
            <person name="Lareau L.F."/>
            <person name="Lazarevic D."/>
            <person name="Lipovich L."/>
            <person name="Liu J."/>
            <person name="Liuni S."/>
            <person name="McWilliam S."/>
            <person name="Madan Babu M."/>
            <person name="Madera M."/>
            <person name="Marchionni L."/>
            <person name="Matsuda H."/>
            <person name="Matsuzawa S."/>
            <person name="Miki H."/>
            <person name="Mignone F."/>
            <person name="Miyake S."/>
            <person name="Morris K."/>
            <person name="Mottagui-Tabar S."/>
            <person name="Mulder N."/>
            <person name="Nakano N."/>
            <person name="Nakauchi H."/>
            <person name="Ng P."/>
            <person name="Nilsson R."/>
            <person name="Nishiguchi S."/>
            <person name="Nishikawa S."/>
            <person name="Nori F."/>
            <person name="Ohara O."/>
            <person name="Okazaki Y."/>
            <person name="Orlando V."/>
            <person name="Pang K.C."/>
            <person name="Pavan W.J."/>
            <person name="Pavesi G."/>
            <person name="Pesole G."/>
            <person name="Petrovsky N."/>
            <person name="Piazza S."/>
            <person name="Reed J."/>
            <person name="Reid J.F."/>
            <person name="Ring B.Z."/>
            <person name="Ringwald M."/>
            <person name="Rost B."/>
            <person name="Ruan Y."/>
            <person name="Salzberg S.L."/>
            <person name="Sandelin A."/>
            <person name="Schneider C."/>
            <person name="Schoenbach C."/>
            <person name="Sekiguchi K."/>
            <person name="Semple C.A."/>
            <person name="Seno S."/>
            <person name="Sessa L."/>
            <person name="Sheng Y."/>
            <person name="Shibata Y."/>
            <person name="Shimada H."/>
            <person name="Shimada K."/>
            <person name="Silva D."/>
            <person name="Sinclair B."/>
            <person name="Sperling S."/>
            <person name="Stupka E."/>
            <person name="Sugiura K."/>
            <person name="Sultana R."/>
            <person name="Takenaka Y."/>
            <person name="Taki K."/>
            <person name="Tammoja K."/>
            <person name="Tan S.L."/>
            <person name="Tang S."/>
            <person name="Taylor M.S."/>
            <person name="Tegner J."/>
            <person name="Teichmann S.A."/>
            <person name="Ueda H.R."/>
            <person name="van Nimwegen E."/>
            <person name="Verardo R."/>
            <person name="Wei C.L."/>
            <person name="Yagi K."/>
            <person name="Yamanishi H."/>
            <person name="Zabarovsky E."/>
            <person name="Zhu S."/>
            <person name="Zimmer A."/>
            <person name="Hide W."/>
            <person name="Bult C."/>
            <person name="Grimmond S.M."/>
            <person name="Teasdale R.D."/>
            <person name="Liu E.T."/>
            <person name="Brusic V."/>
            <person name="Quackenbush J."/>
            <person name="Wahlestedt C."/>
            <person name="Mattick J.S."/>
            <person name="Hume D.A."/>
            <person name="Kai C."/>
            <person name="Sasaki D."/>
            <person name="Tomaru Y."/>
            <person name="Fukuda S."/>
            <person name="Kanamori-Katayama M."/>
            <person name="Suzuki M."/>
            <person name="Aoki J."/>
            <person name="Arakawa T."/>
            <person name="Iida J."/>
            <person name="Imamura K."/>
            <person name="Itoh M."/>
            <person name="Kato T."/>
            <person name="Kawaji H."/>
            <person name="Kawagashira N."/>
            <person name="Kawashima T."/>
            <person name="Kojima M."/>
            <person name="Kondo S."/>
            <person name="Konno H."/>
            <person name="Nakano K."/>
            <person name="Ninomiya N."/>
            <person name="Nishio T."/>
            <person name="Okada M."/>
            <person name="Plessy C."/>
            <person name="Shibata K."/>
            <person name="Shiraki T."/>
            <person name="Suzuki S."/>
            <person name="Tagami M."/>
            <person name="Waki K."/>
            <person name="Watahiki A."/>
            <person name="Okamura-Oho Y."/>
            <person name="Suzuki H."/>
            <person name="Kawai J."/>
            <person name="Hayashizaki Y."/>
        </authorList>
    </citation>
    <scope>NUCLEOTIDE SEQUENCE [LARGE SCALE MRNA]</scope>
    <source>
        <strain>C57BL/6J</strain>
        <tissue>Liver</tissue>
    </source>
</reference>
<reference key="2">
    <citation type="journal article" date="2004" name="Genome Res.">
        <title>The status, quality, and expansion of the NIH full-length cDNA project: the Mammalian Gene Collection (MGC).</title>
        <authorList>
            <consortium name="The MGC Project Team"/>
        </authorList>
    </citation>
    <scope>NUCLEOTIDE SEQUENCE [LARGE SCALE MRNA]</scope>
    <source>
        <strain>C57BL/6J</strain>
        <tissue>Brain</tissue>
        <tissue>Kidney</tissue>
    </source>
</reference>
<reference key="3">
    <citation type="journal article" date="2019" name="Genet. Med.">
        <title>Identification of novel loci for pediatric cholestatic liver disease defined by KIF12, PPM1F, USP53, LSR, and WDR83OS pathogenic variants.</title>
        <authorList>
            <person name="Maddirevula S."/>
            <person name="Alhebbi H."/>
            <person name="Alqahtani A."/>
            <person name="Algoufi T."/>
            <person name="Alsaif H.S."/>
            <person name="Ibrahim N."/>
            <person name="Abdulwahab F."/>
            <person name="Barr M."/>
            <person name="Alzaidan H."/>
            <person name="Almehaideb A."/>
            <person name="AlSasi O."/>
            <person name="Alhashem A."/>
            <person name="Hussaini H.A."/>
            <person name="Wali S."/>
            <person name="Alkuraya F.S."/>
        </authorList>
    </citation>
    <scope>TISSUE SPECIFICITY</scope>
</reference>
<evidence type="ECO:0000250" key="1">
    <source>
        <dbReference type="UniProtKB" id="A0A8I3NQW8"/>
    </source>
</evidence>
<evidence type="ECO:0000250" key="2">
    <source>
        <dbReference type="UniProtKB" id="Q9Y284"/>
    </source>
</evidence>
<evidence type="ECO:0000256" key="3">
    <source>
        <dbReference type="SAM" id="MobiDB-lite"/>
    </source>
</evidence>
<evidence type="ECO:0000269" key="4">
    <source>
    </source>
</evidence>
<evidence type="ECO:0000305" key="5"/>
<evidence type="ECO:0000312" key="6">
    <source>
        <dbReference type="MGI" id="MGI:3041257"/>
    </source>
</evidence>